<organism>
    <name type="scientific">Lithobates pipiens</name>
    <name type="common">Northern leopard frog</name>
    <name type="synonym">Rana pipiens</name>
    <dbReference type="NCBI Taxonomy" id="8404"/>
    <lineage>
        <taxon>Eukaryota</taxon>
        <taxon>Metazoa</taxon>
        <taxon>Chordata</taxon>
        <taxon>Craniata</taxon>
        <taxon>Vertebrata</taxon>
        <taxon>Euteleostomi</taxon>
        <taxon>Amphibia</taxon>
        <taxon>Batrachia</taxon>
        <taxon>Anura</taxon>
        <taxon>Neobatrachia</taxon>
        <taxon>Ranoidea</taxon>
        <taxon>Ranidae</taxon>
        <taxon>Lithobates</taxon>
    </lineage>
</organism>
<name>RNAB_LITPI</name>
<reference evidence="4" key="1">
    <citation type="submission" date="2000-11" db="UniProtKB">
        <title>Isolation, identification and characterization of a novel 5'UTR binding protein for VCAM-1.</title>
        <authorList>
            <person name="Banerjee H.N."/>
            <person name="Blackmon R.H."/>
            <person name="Moses A."/>
            <person name="Harmon G.L."/>
            <person name="Peterson B.L."/>
            <person name="Khan A."/>
        </authorList>
    </citation>
    <scope>PROTEIN SEQUENCE</scope>
    <scope>FUNCTION</scope>
    <source>
        <tissue evidence="2">Embryonic epithelium</tissue>
    </source>
</reference>
<keyword id="KW-0903">Direct protein sequencing</keyword>
<keyword id="KW-0694">RNA-binding</keyword>
<proteinExistence type="evidence at protein level"/>
<dbReference type="PIR" id="A59387">
    <property type="entry name" value="A59387"/>
</dbReference>
<dbReference type="GO" id="GO:0003723">
    <property type="term" value="F:RNA binding"/>
    <property type="evidence" value="ECO:0007669"/>
    <property type="project" value="UniProtKB-KW"/>
</dbReference>
<protein>
    <recommendedName>
        <fullName>RNA-binding protein</fullName>
    </recommendedName>
</protein>
<accession>P82866</accession>
<feature type="chain" id="PRO_0000263032" description="RNA-binding protein">
    <location>
        <begin position="1"/>
        <end position="13" status="greater than"/>
    </location>
</feature>
<feature type="non-terminal residue" evidence="3">
    <location>
        <position position="13"/>
    </location>
</feature>
<sequence length="13" mass="1370">IPLDPVAGYKEPA</sequence>
<evidence type="ECO:0000255" key="1"/>
<evidence type="ECO:0000269" key="2">
    <source ref="1"/>
</evidence>
<evidence type="ECO:0000303" key="3">
    <source ref="1"/>
</evidence>
<evidence type="ECO:0000305" key="4"/>
<comment type="function">
    <text evidence="2">Binds to the VCAM-1 5'-UTR region.</text>
</comment>
<comment type="similarity">
    <text evidence="1">Belongs to the fetuin family.</text>
</comment>